<organism>
    <name type="scientific">Solanum lycopersicum</name>
    <name type="common">Tomato</name>
    <name type="synonym">Lycopersicon esculentum</name>
    <dbReference type="NCBI Taxonomy" id="4081"/>
    <lineage>
        <taxon>Eukaryota</taxon>
        <taxon>Viridiplantae</taxon>
        <taxon>Streptophyta</taxon>
        <taxon>Embryophyta</taxon>
        <taxon>Tracheophyta</taxon>
        <taxon>Spermatophyta</taxon>
        <taxon>Magnoliopsida</taxon>
        <taxon>eudicotyledons</taxon>
        <taxon>Gunneridae</taxon>
        <taxon>Pentapetalae</taxon>
        <taxon>asterids</taxon>
        <taxon>lamiids</taxon>
        <taxon>Solanales</taxon>
        <taxon>Solanaceae</taxon>
        <taxon>Solanoideae</taxon>
        <taxon>Solaneae</taxon>
        <taxon>Solanum</taxon>
        <taxon>Solanum subgen. Lycopersicon</taxon>
    </lineage>
</organism>
<comment type="function">
    <text evidence="4">Transaminase that degrades gamma-amino butyric acid (GABA) and uses pyruvate or glyoxylate as amino-group acceptor. Cannot use beta-alanine, ornithine, acetylornithine, serine, glycine, asparagine, glutamine, glutamate, valine, leucine, isoleucine, methionine, phenylalanine, histidine, lysine, arginine, aspartate, threonine, tyrosine, tryptophan, proline, or cysteine as amino donors.</text>
</comment>
<comment type="catalytic activity">
    <reaction evidence="4">
        <text>4-aminobutanoate + pyruvate = succinate semialdehyde + L-alanine</text>
        <dbReference type="Rhea" id="RHEA:32263"/>
        <dbReference type="ChEBI" id="CHEBI:15361"/>
        <dbReference type="ChEBI" id="CHEBI:57706"/>
        <dbReference type="ChEBI" id="CHEBI:57972"/>
        <dbReference type="ChEBI" id="CHEBI:59888"/>
        <dbReference type="EC" id="2.6.1.96"/>
    </reaction>
</comment>
<comment type="catalytic activity">
    <reaction evidence="4">
        <text>4-aminobutanoate + glyoxylate = succinate semialdehyde + glycine</text>
        <dbReference type="Rhea" id="RHEA:32267"/>
        <dbReference type="ChEBI" id="CHEBI:36655"/>
        <dbReference type="ChEBI" id="CHEBI:57305"/>
        <dbReference type="ChEBI" id="CHEBI:57706"/>
        <dbReference type="ChEBI" id="CHEBI:59888"/>
        <dbReference type="EC" id="2.6.1.96"/>
    </reaction>
</comment>
<comment type="subcellular location">
    <subcellularLocation>
        <location evidence="4">Plastid</location>
        <location evidence="4">Chloroplast</location>
    </subcellularLocation>
</comment>
<comment type="tissue specificity">
    <text evidence="3">Expressed in leaves, roots, stems, flowers and fruits.</text>
</comment>
<comment type="developmental stage">
    <text evidence="3 4">Decreased expression in the yellow and red fruits, after the breaker stage.</text>
</comment>
<comment type="similarity">
    <text evidence="5">Belongs to the class-III pyridoxal-phosphate-dependent aminotransferase family.</text>
</comment>
<sequence>MAKITSLIGSGIVAATNQVGPHVKHIPAVGNLQKQIVSDQIQVRWSSTETSLKNDISATDVRGYKGHDMLAPFTAGWHSTDLEPLVIQKSEGSYVYDVNGKKYLDALAGLWCTSLGGNEPRLVAAATKQLNELAFYHSFWNRSTKPSLDLAKELLDLFTANKMAKAFFTNSGSEANDTQVKLVWYYNNALGRPDKKKFIARTKSYHGSTLISASLSGLPALHQQFDLPAPFVLHTDCPHFWRFHQPGETEEEFSTRLANNLENLILKEGPETIAAFIAEPVMGAGGVIPPPATYFEKVQAILKKYDILFIADEVICGFGRLGTMFGCEKYNIKPDLVSVAKALSSGYMPIGAVLVSPEVSDVIYSQSNKLGTFSHGFTYSGHPVSCAVALETLKIYKERNIIEQVNRISPKFQEGLKAFSDSPIIGEIRGTGLLHGTEFTDNKSPNDPFPPEWGIGAYFGARCEKHGVLVRVAGDNIMMSPPYILSLEEIDELIIKYGKALKDTENRVEELKSQKKIKSS</sequence>
<protein>
    <recommendedName>
        <fullName>Gamma aminobutyrate transaminase 3, chloroplastic</fullName>
    </recommendedName>
    <alternativeName>
        <fullName>Gamma-aminobutyrate transaminase isozyme 3</fullName>
        <shortName>LeGABA-TP3</shortName>
        <shortName>SlGABA-T3</shortName>
        <ecNumber>2.6.1.96</ecNumber>
    </alternativeName>
</protein>
<dbReference type="EC" id="2.6.1.96"/>
<dbReference type="EMBL" id="AY240231">
    <property type="protein sequence ID" value="AAO92257.1"/>
    <property type="molecule type" value="mRNA"/>
</dbReference>
<dbReference type="EMBL" id="AB359918">
    <property type="protein sequence ID" value="BAG16484.1"/>
    <property type="molecule type" value="mRNA"/>
</dbReference>
<dbReference type="SMR" id="Q84P52"/>
<dbReference type="FunCoup" id="Q84P52">
    <property type="interactions" value="918"/>
</dbReference>
<dbReference type="STRING" id="4081.Q84P52"/>
<dbReference type="PaxDb" id="4081-Solyc12g006450.1.1"/>
<dbReference type="eggNOG" id="KOG1404">
    <property type="taxonomic scope" value="Eukaryota"/>
</dbReference>
<dbReference type="InParanoid" id="Q84P52"/>
<dbReference type="BRENDA" id="2.6.1.19">
    <property type="organism ID" value="3101"/>
</dbReference>
<dbReference type="BRENDA" id="2.6.1.96">
    <property type="organism ID" value="3101"/>
</dbReference>
<dbReference type="Proteomes" id="UP000004994">
    <property type="component" value="Unplaced"/>
</dbReference>
<dbReference type="ExpressionAtlas" id="Q84P52">
    <property type="expression patterns" value="baseline and differential"/>
</dbReference>
<dbReference type="GO" id="GO:0009507">
    <property type="term" value="C:chloroplast"/>
    <property type="evidence" value="ECO:0007669"/>
    <property type="project" value="UniProtKB-SubCell"/>
</dbReference>
<dbReference type="GO" id="GO:0034387">
    <property type="term" value="F:4-aminobutyrate:pyruvate transaminase activity"/>
    <property type="evidence" value="ECO:0007669"/>
    <property type="project" value="UniProtKB-EC"/>
</dbReference>
<dbReference type="GO" id="GO:0004015">
    <property type="term" value="F:adenosylmethionine-8-amino-7-oxononanoate transaminase activity"/>
    <property type="evidence" value="ECO:0000318"/>
    <property type="project" value="GO_Central"/>
</dbReference>
<dbReference type="GO" id="GO:0030170">
    <property type="term" value="F:pyridoxal phosphate binding"/>
    <property type="evidence" value="ECO:0007669"/>
    <property type="project" value="InterPro"/>
</dbReference>
<dbReference type="GO" id="GO:0009102">
    <property type="term" value="P:biotin biosynthetic process"/>
    <property type="evidence" value="ECO:0000318"/>
    <property type="project" value="GO_Central"/>
</dbReference>
<dbReference type="GO" id="GO:0009448">
    <property type="term" value="P:gamma-aminobutyric acid metabolic process"/>
    <property type="evidence" value="ECO:0000318"/>
    <property type="project" value="GO_Central"/>
</dbReference>
<dbReference type="CDD" id="cd00610">
    <property type="entry name" value="OAT_like"/>
    <property type="match status" value="1"/>
</dbReference>
<dbReference type="FunFam" id="3.40.640.10:FF:000014">
    <property type="entry name" value="Adenosylmethionine-8-amino-7-oxononanoate aminotransferase, probable"/>
    <property type="match status" value="1"/>
</dbReference>
<dbReference type="Gene3D" id="3.90.1150.10">
    <property type="entry name" value="Aspartate Aminotransferase, domain 1"/>
    <property type="match status" value="1"/>
</dbReference>
<dbReference type="Gene3D" id="3.40.640.10">
    <property type="entry name" value="Type I PLP-dependent aspartate aminotransferase-like (Major domain)"/>
    <property type="match status" value="1"/>
</dbReference>
<dbReference type="InterPro" id="IPR005814">
    <property type="entry name" value="Aminotrans_3"/>
</dbReference>
<dbReference type="InterPro" id="IPR049704">
    <property type="entry name" value="Aminotrans_3_PPA_site"/>
</dbReference>
<dbReference type="InterPro" id="IPR015424">
    <property type="entry name" value="PyrdxlP-dep_Trfase"/>
</dbReference>
<dbReference type="InterPro" id="IPR015421">
    <property type="entry name" value="PyrdxlP-dep_Trfase_major"/>
</dbReference>
<dbReference type="InterPro" id="IPR015422">
    <property type="entry name" value="PyrdxlP-dep_Trfase_small"/>
</dbReference>
<dbReference type="NCBIfam" id="NF004767">
    <property type="entry name" value="PRK06105.1"/>
    <property type="match status" value="1"/>
</dbReference>
<dbReference type="PANTHER" id="PTHR42684">
    <property type="entry name" value="ADENOSYLMETHIONINE-8-AMINO-7-OXONONANOATE AMINOTRANSFERASE"/>
    <property type="match status" value="1"/>
</dbReference>
<dbReference type="PANTHER" id="PTHR42684:SF19">
    <property type="entry name" value="GAMMA AMINOBUTYRATE TRANSAMINASE 3, CHLOROPLASTIC"/>
    <property type="match status" value="1"/>
</dbReference>
<dbReference type="Pfam" id="PF00202">
    <property type="entry name" value="Aminotran_3"/>
    <property type="match status" value="1"/>
</dbReference>
<dbReference type="SUPFAM" id="SSF53383">
    <property type="entry name" value="PLP-dependent transferases"/>
    <property type="match status" value="1"/>
</dbReference>
<dbReference type="PROSITE" id="PS00600">
    <property type="entry name" value="AA_TRANSFER_CLASS_3"/>
    <property type="match status" value="1"/>
</dbReference>
<keyword id="KW-0032">Aminotransferase</keyword>
<keyword id="KW-0150">Chloroplast</keyword>
<keyword id="KW-0934">Plastid</keyword>
<keyword id="KW-0663">Pyridoxal phosphate</keyword>
<keyword id="KW-1185">Reference proteome</keyword>
<keyword id="KW-0808">Transferase</keyword>
<keyword id="KW-0809">Transit peptide</keyword>
<name>GATP3_SOLLC</name>
<feature type="transit peptide" description="Chloroplast" evidence="2">
    <location>
        <begin position="1"/>
        <end position="44"/>
    </location>
</feature>
<feature type="chain" id="PRO_0000416857" description="Gamma aminobutyrate transaminase 3, chloroplastic">
    <location>
        <begin position="45"/>
        <end position="520"/>
    </location>
</feature>
<feature type="binding site" evidence="1">
    <location>
        <begin position="172"/>
        <end position="173"/>
    </location>
    <ligand>
        <name>pyridoxal 5'-phosphate</name>
        <dbReference type="ChEBI" id="CHEBI:597326"/>
    </ligand>
</feature>
<feature type="binding site" evidence="1">
    <location>
        <position position="205"/>
    </location>
    <ligand>
        <name>substrate</name>
    </ligand>
</feature>
<feature type="binding site" evidence="1">
    <location>
        <position position="312"/>
    </location>
    <ligand>
        <name>pyridoxal 5'-phosphate</name>
        <dbReference type="ChEBI" id="CHEBI:597326"/>
    </ligand>
</feature>
<feature type="binding site" evidence="1">
    <location>
        <position position="341"/>
    </location>
    <ligand>
        <name>substrate</name>
    </ligand>
</feature>
<feature type="modified residue" description="N6-(pyridoxal phosphate)lysine" evidence="1">
    <location>
        <position position="341"/>
    </location>
</feature>
<accession>Q84P52</accession>
<proteinExistence type="evidence at protein level"/>
<reference key="1">
    <citation type="journal article" date="2008" name="Plant Cell Physiol.">
        <title>Biochemical mechanism on GABA accumulation during fruit development in tomato.</title>
        <authorList>
            <person name="Akihiro T."/>
            <person name="Koike S."/>
            <person name="Tani R."/>
            <person name="Tominaga T."/>
            <person name="Watanabe S."/>
            <person name="Iijima Y."/>
            <person name="Aoki K."/>
            <person name="Shibata D."/>
            <person name="Ashihara H."/>
            <person name="Matsukura C."/>
            <person name="Akama K."/>
            <person name="Fujimura T."/>
            <person name="Ezura H."/>
        </authorList>
    </citation>
    <scope>NUCLEOTIDE SEQUENCE [MRNA]</scope>
    <scope>TISSUE SPECIFICITY</scope>
    <scope>DEVELOPMENTAL STAGE</scope>
    <source>
        <strain>cv. MicroTom</strain>
        <tissue>Fruit</tissue>
    </source>
</reference>
<reference key="2">
    <citation type="journal article" date="2009" name="J. Exp. Bot.">
        <title>Subcellular localization and expression of multiple tomato gamma-aminobutyrate transaminases that utilize both pyruvate and glyoxylate.</title>
        <authorList>
            <person name="Clark S.M."/>
            <person name="Di Leo R."/>
            <person name="Van Cauwenberghe O.R."/>
            <person name="Mullen R.T."/>
            <person name="Shelp B.J."/>
        </authorList>
    </citation>
    <scope>NUCLEOTIDE SEQUENCE [MRNA]</scope>
    <scope>FUNCTION</scope>
    <scope>CATALYTIC ACTIVITY</scope>
    <scope>SUBCELLULAR LOCATION</scope>
    <scope>DEVELOPMENTAL STAGE</scope>
    <source>
        <strain>cv. MicroTom</strain>
    </source>
</reference>
<gene>
    <name type="primary">GABA-TP3</name>
    <name type="synonym">GABA-T3</name>
</gene>
<evidence type="ECO:0000250" key="1"/>
<evidence type="ECO:0000255" key="2"/>
<evidence type="ECO:0000269" key="3">
    <source>
    </source>
</evidence>
<evidence type="ECO:0000269" key="4">
    <source>
    </source>
</evidence>
<evidence type="ECO:0000305" key="5"/>